<feature type="chain" id="PRO_1000204448" description="Cytidylate kinase">
    <location>
        <begin position="1"/>
        <end position="227"/>
    </location>
</feature>
<feature type="binding site" evidence="1">
    <location>
        <begin position="12"/>
        <end position="20"/>
    </location>
    <ligand>
        <name>ATP</name>
        <dbReference type="ChEBI" id="CHEBI:30616"/>
    </ligand>
</feature>
<name>KCY_ECOBW</name>
<gene>
    <name evidence="1" type="primary">cmk</name>
    <name type="ordered locus">BWG_0762</name>
</gene>
<evidence type="ECO:0000255" key="1">
    <source>
        <dbReference type="HAMAP-Rule" id="MF_00238"/>
    </source>
</evidence>
<comment type="catalytic activity">
    <reaction evidence="1">
        <text>CMP + ATP = CDP + ADP</text>
        <dbReference type="Rhea" id="RHEA:11600"/>
        <dbReference type="ChEBI" id="CHEBI:30616"/>
        <dbReference type="ChEBI" id="CHEBI:58069"/>
        <dbReference type="ChEBI" id="CHEBI:60377"/>
        <dbReference type="ChEBI" id="CHEBI:456216"/>
        <dbReference type="EC" id="2.7.4.25"/>
    </reaction>
</comment>
<comment type="catalytic activity">
    <reaction evidence="1">
        <text>dCMP + ATP = dCDP + ADP</text>
        <dbReference type="Rhea" id="RHEA:25094"/>
        <dbReference type="ChEBI" id="CHEBI:30616"/>
        <dbReference type="ChEBI" id="CHEBI:57566"/>
        <dbReference type="ChEBI" id="CHEBI:58593"/>
        <dbReference type="ChEBI" id="CHEBI:456216"/>
        <dbReference type="EC" id="2.7.4.25"/>
    </reaction>
</comment>
<comment type="subcellular location">
    <subcellularLocation>
        <location evidence="1">Cytoplasm</location>
    </subcellularLocation>
</comment>
<comment type="similarity">
    <text evidence="1">Belongs to the cytidylate kinase family. Type 1 subfamily.</text>
</comment>
<reference key="1">
    <citation type="journal article" date="2009" name="J. Bacteriol.">
        <title>Genomic sequencing reveals regulatory mutations and recombinational events in the widely used MC4100 lineage of Escherichia coli K-12.</title>
        <authorList>
            <person name="Ferenci T."/>
            <person name="Zhou Z."/>
            <person name="Betteridge T."/>
            <person name="Ren Y."/>
            <person name="Liu Y."/>
            <person name="Feng L."/>
            <person name="Reeves P.R."/>
            <person name="Wang L."/>
        </authorList>
    </citation>
    <scope>NUCLEOTIDE SEQUENCE [LARGE SCALE GENOMIC DNA]</scope>
    <source>
        <strain>K12 / MC4100 / BW2952</strain>
    </source>
</reference>
<accession>C4ZQ36</accession>
<dbReference type="EC" id="2.7.4.25" evidence="1"/>
<dbReference type="EMBL" id="CP001396">
    <property type="protein sequence ID" value="ACR62698.1"/>
    <property type="molecule type" value="Genomic_DNA"/>
</dbReference>
<dbReference type="RefSeq" id="WP_000125016.1">
    <property type="nucleotide sequence ID" value="NC_012759.1"/>
</dbReference>
<dbReference type="SMR" id="C4ZQ36"/>
<dbReference type="GeneID" id="93776507"/>
<dbReference type="KEGG" id="ebw:BWG_0762"/>
<dbReference type="HOGENOM" id="CLU_079959_0_2_6"/>
<dbReference type="GO" id="GO:0005829">
    <property type="term" value="C:cytosol"/>
    <property type="evidence" value="ECO:0007669"/>
    <property type="project" value="TreeGrafter"/>
</dbReference>
<dbReference type="GO" id="GO:0005524">
    <property type="term" value="F:ATP binding"/>
    <property type="evidence" value="ECO:0007669"/>
    <property type="project" value="UniProtKB-UniRule"/>
</dbReference>
<dbReference type="GO" id="GO:0036430">
    <property type="term" value="F:CMP kinase activity"/>
    <property type="evidence" value="ECO:0007669"/>
    <property type="project" value="RHEA"/>
</dbReference>
<dbReference type="GO" id="GO:0036431">
    <property type="term" value="F:dCMP kinase activity"/>
    <property type="evidence" value="ECO:0007669"/>
    <property type="project" value="RHEA"/>
</dbReference>
<dbReference type="GO" id="GO:0015949">
    <property type="term" value="P:nucleobase-containing small molecule interconversion"/>
    <property type="evidence" value="ECO:0007669"/>
    <property type="project" value="TreeGrafter"/>
</dbReference>
<dbReference type="GO" id="GO:0006220">
    <property type="term" value="P:pyrimidine nucleotide metabolic process"/>
    <property type="evidence" value="ECO:0007669"/>
    <property type="project" value="UniProtKB-UniRule"/>
</dbReference>
<dbReference type="CDD" id="cd02020">
    <property type="entry name" value="CMPK"/>
    <property type="match status" value="1"/>
</dbReference>
<dbReference type="FunFam" id="3.40.50.300:FF:000262">
    <property type="entry name" value="Cytidylate kinase"/>
    <property type="match status" value="1"/>
</dbReference>
<dbReference type="Gene3D" id="3.40.50.300">
    <property type="entry name" value="P-loop containing nucleotide triphosphate hydrolases"/>
    <property type="match status" value="1"/>
</dbReference>
<dbReference type="HAMAP" id="MF_00238">
    <property type="entry name" value="Cytidyl_kinase_type1"/>
    <property type="match status" value="1"/>
</dbReference>
<dbReference type="InterPro" id="IPR003136">
    <property type="entry name" value="Cytidylate_kin"/>
</dbReference>
<dbReference type="InterPro" id="IPR011994">
    <property type="entry name" value="Cytidylate_kinase_dom"/>
</dbReference>
<dbReference type="InterPro" id="IPR027417">
    <property type="entry name" value="P-loop_NTPase"/>
</dbReference>
<dbReference type="NCBIfam" id="TIGR00017">
    <property type="entry name" value="cmk"/>
    <property type="match status" value="1"/>
</dbReference>
<dbReference type="PANTHER" id="PTHR21299:SF2">
    <property type="entry name" value="CYTIDYLATE KINASE"/>
    <property type="match status" value="1"/>
</dbReference>
<dbReference type="PANTHER" id="PTHR21299">
    <property type="entry name" value="CYTIDYLATE KINASE/PANTOATE-BETA-ALANINE LIGASE"/>
    <property type="match status" value="1"/>
</dbReference>
<dbReference type="Pfam" id="PF02224">
    <property type="entry name" value="Cytidylate_kin"/>
    <property type="match status" value="1"/>
</dbReference>
<dbReference type="SUPFAM" id="SSF52540">
    <property type="entry name" value="P-loop containing nucleoside triphosphate hydrolases"/>
    <property type="match status" value="1"/>
</dbReference>
<keyword id="KW-0067">ATP-binding</keyword>
<keyword id="KW-0963">Cytoplasm</keyword>
<keyword id="KW-0418">Kinase</keyword>
<keyword id="KW-0547">Nucleotide-binding</keyword>
<keyword id="KW-0808">Transferase</keyword>
<organism>
    <name type="scientific">Escherichia coli (strain K12 / MC4100 / BW2952)</name>
    <dbReference type="NCBI Taxonomy" id="595496"/>
    <lineage>
        <taxon>Bacteria</taxon>
        <taxon>Pseudomonadati</taxon>
        <taxon>Pseudomonadota</taxon>
        <taxon>Gammaproteobacteria</taxon>
        <taxon>Enterobacterales</taxon>
        <taxon>Enterobacteriaceae</taxon>
        <taxon>Escherichia</taxon>
    </lineage>
</organism>
<sequence length="227" mass="24746">MTAIAPVITIDGPSGAGKGTLCKAMAEALQWHLLDSGAIYRVLALAALHHHVDVASEDALVPLASHLDVRFVSTNGNLEVILEGEDVSGEIRTQEVANAASQVAAFPRVREALLRRQRAFRELPGLIADGRDMGTVVFPDAPVKIFLDASSEERAHRRMLQLQEKGFSVNFERLLAEIKERDDRDRNRAVAPLVPAADALVLDSTTLSIEQVIEKALQYARQKLALA</sequence>
<protein>
    <recommendedName>
        <fullName evidence="1">Cytidylate kinase</fullName>
        <shortName evidence="1">CK</shortName>
        <ecNumber evidence="1">2.7.4.25</ecNumber>
    </recommendedName>
    <alternativeName>
        <fullName evidence="1">Cytidine monophosphate kinase</fullName>
        <shortName evidence="1">CMP kinase</shortName>
    </alternativeName>
</protein>
<proteinExistence type="inferred from homology"/>